<proteinExistence type="inferred from homology"/>
<keyword id="KW-0275">Fatty acid biosynthesis</keyword>
<keyword id="KW-0276">Fatty acid metabolism</keyword>
<keyword id="KW-0444">Lipid biosynthesis</keyword>
<keyword id="KW-0443">Lipid metabolism</keyword>
<keyword id="KW-0520">NAD</keyword>
<keyword id="KW-0560">Oxidoreductase</keyword>
<keyword id="KW-1185">Reference proteome</keyword>
<gene>
    <name evidence="1" type="primary">fabV</name>
    <name type="ordered locus">ETA_17430</name>
</gene>
<feature type="chain" id="PRO_1000188364" description="Enoyl-[acyl-carrier-protein] reductase [NADH]">
    <location>
        <begin position="1"/>
        <end position="399"/>
    </location>
</feature>
<feature type="active site" description="Proton donor" evidence="1">
    <location>
        <position position="235"/>
    </location>
</feature>
<feature type="binding site" evidence="1">
    <location>
        <begin position="48"/>
        <end position="53"/>
    </location>
    <ligand>
        <name>NAD(+)</name>
        <dbReference type="ChEBI" id="CHEBI:57540"/>
    </ligand>
</feature>
<feature type="binding site" evidence="1">
    <location>
        <begin position="74"/>
        <end position="75"/>
    </location>
    <ligand>
        <name>NAD(+)</name>
        <dbReference type="ChEBI" id="CHEBI:57540"/>
    </ligand>
</feature>
<feature type="binding site" evidence="1">
    <location>
        <begin position="111"/>
        <end position="112"/>
    </location>
    <ligand>
        <name>NAD(+)</name>
        <dbReference type="ChEBI" id="CHEBI:57540"/>
    </ligand>
</feature>
<feature type="binding site" evidence="1">
    <location>
        <begin position="139"/>
        <end position="140"/>
    </location>
    <ligand>
        <name>NAD(+)</name>
        <dbReference type="ChEBI" id="CHEBI:57540"/>
    </ligand>
</feature>
<feature type="binding site" evidence="1">
    <location>
        <position position="225"/>
    </location>
    <ligand>
        <name>substrate</name>
    </ligand>
</feature>
<feature type="binding site" evidence="1">
    <location>
        <position position="244"/>
    </location>
    <ligand>
        <name>NAD(+)</name>
        <dbReference type="ChEBI" id="CHEBI:57540"/>
    </ligand>
</feature>
<feature type="binding site" evidence="1">
    <location>
        <begin position="274"/>
        <end position="276"/>
    </location>
    <ligand>
        <name>NAD(+)</name>
        <dbReference type="ChEBI" id="CHEBI:57540"/>
    </ligand>
</feature>
<feature type="site" description="Plays an important role in discriminating NADH against NADPH" evidence="1">
    <location>
        <position position="75"/>
    </location>
</feature>
<reference key="1">
    <citation type="journal article" date="2008" name="Environ. Microbiol.">
        <title>The genome of Erwinia tasmaniensis strain Et1/99, a non-pathogenic bacterium in the genus Erwinia.</title>
        <authorList>
            <person name="Kube M."/>
            <person name="Migdoll A.M."/>
            <person name="Mueller I."/>
            <person name="Kuhl H."/>
            <person name="Beck A."/>
            <person name="Reinhardt R."/>
            <person name="Geider K."/>
        </authorList>
    </citation>
    <scope>NUCLEOTIDE SEQUENCE [LARGE SCALE GENOMIC DNA]</scope>
    <source>
        <strain>DSM 17950 / CFBP 7177 / CIP 109463 / NCPPB 4357 / Et1/99</strain>
    </source>
</reference>
<dbReference type="EC" id="1.3.1.9" evidence="1"/>
<dbReference type="EMBL" id="CU468135">
    <property type="protein sequence ID" value="CAO96789.1"/>
    <property type="molecule type" value="Genomic_DNA"/>
</dbReference>
<dbReference type="RefSeq" id="WP_012441478.1">
    <property type="nucleotide sequence ID" value="NC_010694.1"/>
</dbReference>
<dbReference type="SMR" id="B2VET7"/>
<dbReference type="STRING" id="465817.ETA_17430"/>
<dbReference type="KEGG" id="eta:ETA_17430"/>
<dbReference type="eggNOG" id="COG3007">
    <property type="taxonomic scope" value="Bacteria"/>
</dbReference>
<dbReference type="HOGENOM" id="CLU_057698_1_0_6"/>
<dbReference type="OrthoDB" id="9802260at2"/>
<dbReference type="UniPathway" id="UPA00094"/>
<dbReference type="Proteomes" id="UP000001726">
    <property type="component" value="Chromosome"/>
</dbReference>
<dbReference type="GO" id="GO:0004318">
    <property type="term" value="F:enoyl-[acyl-carrier-protein] reductase (NADH) activity"/>
    <property type="evidence" value="ECO:0007669"/>
    <property type="project" value="UniProtKB-UniRule"/>
</dbReference>
<dbReference type="GO" id="GO:0051287">
    <property type="term" value="F:NAD binding"/>
    <property type="evidence" value="ECO:0007669"/>
    <property type="project" value="UniProtKB-UniRule"/>
</dbReference>
<dbReference type="GO" id="GO:0050343">
    <property type="term" value="F:trans-2-enoyl-CoA reductase (NADH) activity"/>
    <property type="evidence" value="ECO:0007669"/>
    <property type="project" value="TreeGrafter"/>
</dbReference>
<dbReference type="GO" id="GO:0006633">
    <property type="term" value="P:fatty acid biosynthetic process"/>
    <property type="evidence" value="ECO:0007669"/>
    <property type="project" value="UniProtKB-UniRule"/>
</dbReference>
<dbReference type="FunFam" id="3.40.50.720:FF:000221">
    <property type="entry name" value="Enoyl-[acyl-carrier-protein] reductase [NADH]"/>
    <property type="match status" value="1"/>
</dbReference>
<dbReference type="Gene3D" id="3.40.50.720">
    <property type="entry name" value="NAD(P)-binding Rossmann-like Domain"/>
    <property type="match status" value="1"/>
</dbReference>
<dbReference type="HAMAP" id="MF_01838">
    <property type="entry name" value="FabV_reductase"/>
    <property type="match status" value="1"/>
</dbReference>
<dbReference type="InterPro" id="IPR024906">
    <property type="entry name" value="Eno_Rdtase_FAD-bd_dom"/>
</dbReference>
<dbReference type="InterPro" id="IPR024910">
    <property type="entry name" value="Enoyl-CoA_Rdtase_cat_dom"/>
</dbReference>
<dbReference type="InterPro" id="IPR050048">
    <property type="entry name" value="FabV-like_NADH_b"/>
</dbReference>
<dbReference type="InterPro" id="IPR010758">
    <property type="entry name" value="Trans-2-enoyl-CoA_reductase"/>
</dbReference>
<dbReference type="NCBIfam" id="NF043048">
    <property type="entry name" value="EnoyACPredFabV"/>
    <property type="match status" value="1"/>
</dbReference>
<dbReference type="NCBIfam" id="NF010177">
    <property type="entry name" value="PRK13656.1"/>
    <property type="match status" value="1"/>
</dbReference>
<dbReference type="PANTHER" id="PTHR37480">
    <property type="entry name" value="ENOYL-[ACYL-CARRIER-PROTEIN] REDUCTASE [NADH]"/>
    <property type="match status" value="1"/>
</dbReference>
<dbReference type="PANTHER" id="PTHR37480:SF1">
    <property type="entry name" value="ENOYL-[ACYL-CARRIER-PROTEIN] REDUCTASE [NADH]"/>
    <property type="match status" value="1"/>
</dbReference>
<dbReference type="Pfam" id="PF07055">
    <property type="entry name" value="Eno-Rase_FAD_bd"/>
    <property type="match status" value="1"/>
</dbReference>
<dbReference type="Pfam" id="PF12242">
    <property type="entry name" value="Eno-Rase_NADH_b"/>
    <property type="match status" value="1"/>
</dbReference>
<dbReference type="Pfam" id="PF12241">
    <property type="entry name" value="Enoyl_reductase"/>
    <property type="match status" value="1"/>
</dbReference>
<accession>B2VET7</accession>
<protein>
    <recommendedName>
        <fullName evidence="1">Enoyl-[acyl-carrier-protein] reductase [NADH]</fullName>
        <shortName evidence="1">ENR</shortName>
        <ecNumber evidence="1">1.3.1.9</ecNumber>
    </recommendedName>
</protein>
<evidence type="ECO:0000255" key="1">
    <source>
        <dbReference type="HAMAP-Rule" id="MF_01838"/>
    </source>
</evidence>
<organism>
    <name type="scientific">Erwinia tasmaniensis (strain DSM 17950 / CFBP 7177 / CIP 109463 / NCPPB 4357 / Et1/99)</name>
    <dbReference type="NCBI Taxonomy" id="465817"/>
    <lineage>
        <taxon>Bacteria</taxon>
        <taxon>Pseudomonadati</taxon>
        <taxon>Pseudomonadota</taxon>
        <taxon>Gammaproteobacteria</taxon>
        <taxon>Enterobacterales</taxon>
        <taxon>Erwiniaceae</taxon>
        <taxon>Erwinia</taxon>
    </lineage>
</organism>
<comment type="function">
    <text evidence="1">Involved in the final reduction of the elongation cycle of fatty acid synthesis (FAS II). Catalyzes the reduction of a carbon-carbon double bond in an enoyl moiety that is covalently linked to an acyl carrier protein (ACP).</text>
</comment>
<comment type="catalytic activity">
    <reaction evidence="1">
        <text>a 2,3-saturated acyl-[ACP] + NAD(+) = a (2E)-enoyl-[ACP] + NADH + H(+)</text>
        <dbReference type="Rhea" id="RHEA:10240"/>
        <dbReference type="Rhea" id="RHEA-COMP:9925"/>
        <dbReference type="Rhea" id="RHEA-COMP:9926"/>
        <dbReference type="ChEBI" id="CHEBI:15378"/>
        <dbReference type="ChEBI" id="CHEBI:57540"/>
        <dbReference type="ChEBI" id="CHEBI:57945"/>
        <dbReference type="ChEBI" id="CHEBI:78784"/>
        <dbReference type="ChEBI" id="CHEBI:78785"/>
        <dbReference type="EC" id="1.3.1.9"/>
    </reaction>
</comment>
<comment type="pathway">
    <text evidence="1">Lipid metabolism; fatty acid biosynthesis.</text>
</comment>
<comment type="subunit">
    <text evidence="1">Monomer.</text>
</comment>
<comment type="similarity">
    <text evidence="1">Belongs to the TER reductase family.</text>
</comment>
<name>FABV_ERWT9</name>
<sequence length="399" mass="43320">MIIKPRIRGFICVTAHPAGCKANVEKQIEYVTAQGAITSGPKKVLVIGASTGYGLAARISAAFGCNADTLGVFFERAGEENKPATAGWYNSAAFEELATAKGLYANSINGDAYSDAVKQKTIETIRQDLGQVDLVVYSLAAPRRTHPKTGEVFNSTLKPIGKPLTTRGLNTDKETITDVSLEPASAEEIEGTVAVMGGEDWQMWIDALLEAGVLAEGAKTTAFTYLGEKITHDIYWNGSIGEAKKDLDKRVLTIRDTLAAHGNGDARVSVLKAVVTQASSAIPVMPLYLSLLFKVMKEKGTHEGCIEQVYGLFKDSLYNAAPIVDETGRLRADYKELQPEVQDEVSALWPTVTNENLNQLTDFVGYKKEFMHLFGFGLEGVDYDADVNPDVKIKNLVQM</sequence>